<sequence length="17" mass="1856">INWKKIAEVGGKILSSL</sequence>
<name>MASTA_POLDO</name>
<dbReference type="Proteomes" id="UP000694924">
    <property type="component" value="Unplaced"/>
</dbReference>
<dbReference type="GO" id="GO:0005576">
    <property type="term" value="C:extracellular region"/>
    <property type="evidence" value="ECO:0007669"/>
    <property type="project" value="UniProtKB-SubCell"/>
</dbReference>
<dbReference type="GO" id="GO:0042742">
    <property type="term" value="P:defense response to bacterium"/>
    <property type="evidence" value="ECO:0007669"/>
    <property type="project" value="UniProtKB-KW"/>
</dbReference>
<dbReference type="GO" id="GO:0045087">
    <property type="term" value="P:innate immune response"/>
    <property type="evidence" value="ECO:0007669"/>
    <property type="project" value="UniProtKB-KW"/>
</dbReference>
<comment type="function">
    <text evidence="1">Shows antimicrobial activity against the Gram-positive bacteria B.subtilis ATCC 6633 (MIC=2 ug/ml), and the Gram-negative bacteria E.coli JM109 (MIC=8 ug/ml).</text>
</comment>
<comment type="subcellular location">
    <subcellularLocation>
        <location evidence="1">Secreted</location>
    </subcellularLocation>
</comment>
<comment type="tissue specificity">
    <text evidence="1">Expressed by the venom gland. This peptide is also found on female cuticle and nest paper. The venom could be the source of these peptides, which could be spread all over the cuticle by the frequent grooming movements of the female wasps.</text>
</comment>
<comment type="mass spectrometry" mass="1854.08" method="Electrospray" evidence="1"/>
<comment type="mass spectrometry" mass="1854.11" method="MALDI" evidence="1"/>
<comment type="similarity">
    <text evidence="3">Belongs to the MCD family. Mastoparan subfamily.</text>
</comment>
<proteinExistence type="evidence at protein level"/>
<organism>
    <name type="scientific">Polistes dominula</name>
    <name type="common">European paper wasp</name>
    <name type="synonym">Vespa dominula</name>
    <dbReference type="NCBI Taxonomy" id="743375"/>
    <lineage>
        <taxon>Eukaryota</taxon>
        <taxon>Metazoa</taxon>
        <taxon>Ecdysozoa</taxon>
        <taxon>Arthropoda</taxon>
        <taxon>Hexapoda</taxon>
        <taxon>Insecta</taxon>
        <taxon>Pterygota</taxon>
        <taxon>Neoptera</taxon>
        <taxon>Endopterygota</taxon>
        <taxon>Hymenoptera</taxon>
        <taxon>Apocrita</taxon>
        <taxon>Aculeata</taxon>
        <taxon>Vespoidea</taxon>
        <taxon>Vespidae</taxon>
        <taxon>Polistinae</taxon>
        <taxon>Polistini</taxon>
        <taxon>Polistes</taxon>
    </lineage>
</organism>
<reference key="1">
    <citation type="journal article" date="2006" name="J. Am. Soc. Mass Spectrom.">
        <title>Dominulin A and B: two new antibacterial peptides identified on the cuticle and in the venom of the social paper wasp Polistes dominulus using MALDI-TOF, MALDI-TOF/TOF, and ESI-ion trap.</title>
        <authorList>
            <person name="Turillazzi S."/>
            <person name="Mastrobuoni G."/>
            <person name="Dani F.R."/>
            <person name="Moneti G."/>
            <person name="Pieraccini G."/>
            <person name="la Marca G."/>
            <person name="Bartolucci G."/>
            <person name="Perito B."/>
            <person name="Lambardi D."/>
            <person name="Cavallini V."/>
            <person name="Dapporto L."/>
        </authorList>
    </citation>
    <scope>PROTEIN SEQUENCE</scope>
    <scope>FUNCTION</scope>
    <scope>SUBCELLULAR LOCATION</scope>
    <scope>TISSUE SPECIFICITY</scope>
    <scope>AMIDATION AT LEU-17</scope>
    <scope>MASS SPECTROMETRY</scope>
    <scope>SYNTHESIS</scope>
    <source>
        <tissue>Cuticle</tissue>
        <tissue>Venom</tissue>
    </source>
</reference>
<keyword id="KW-0027">Amidation</keyword>
<keyword id="KW-0044">Antibiotic</keyword>
<keyword id="KW-0929">Antimicrobial</keyword>
<keyword id="KW-0903">Direct protein sequencing</keyword>
<keyword id="KW-0391">Immunity</keyword>
<keyword id="KW-0399">Innate immunity</keyword>
<keyword id="KW-0964">Secreted</keyword>
<protein>
    <recommendedName>
        <fullName evidence="2">Dominulin-A</fullName>
    </recommendedName>
</protein>
<accession>P0C1M6</accession>
<feature type="peptide" id="PRO_0000246012" description="Dominulin-A" evidence="1">
    <location>
        <begin position="1"/>
        <end position="17"/>
    </location>
</feature>
<feature type="modified residue" description="Leucine amide" evidence="1">
    <location>
        <position position="17"/>
    </location>
</feature>
<evidence type="ECO:0000269" key="1">
    <source>
    </source>
</evidence>
<evidence type="ECO:0000303" key="2">
    <source>
    </source>
</evidence>
<evidence type="ECO:0000305" key="3"/>